<proteinExistence type="inferred from homology"/>
<organism>
    <name type="scientific">Streptococcus pneumoniae (strain Taiwan19F-14)</name>
    <dbReference type="NCBI Taxonomy" id="487213"/>
    <lineage>
        <taxon>Bacteria</taxon>
        <taxon>Bacillati</taxon>
        <taxon>Bacillota</taxon>
        <taxon>Bacilli</taxon>
        <taxon>Lactobacillales</taxon>
        <taxon>Streptococcaceae</taxon>
        <taxon>Streptococcus</taxon>
    </lineage>
</organism>
<reference key="1">
    <citation type="journal article" date="2010" name="Genome Biol.">
        <title>Structure and dynamics of the pan-genome of Streptococcus pneumoniae and closely related species.</title>
        <authorList>
            <person name="Donati C."/>
            <person name="Hiller N.L."/>
            <person name="Tettelin H."/>
            <person name="Muzzi A."/>
            <person name="Croucher N.J."/>
            <person name="Angiuoli S.V."/>
            <person name="Oggioni M."/>
            <person name="Dunning Hotopp J.C."/>
            <person name="Hu F.Z."/>
            <person name="Riley D.R."/>
            <person name="Covacci A."/>
            <person name="Mitchell T.J."/>
            <person name="Bentley S.D."/>
            <person name="Kilian M."/>
            <person name="Ehrlich G.D."/>
            <person name="Rappuoli R."/>
            <person name="Moxon E.R."/>
            <person name="Masignani V."/>
        </authorList>
    </citation>
    <scope>NUCLEOTIDE SEQUENCE [LARGE SCALE GENOMIC DNA]</scope>
    <source>
        <strain>Taiwan19F-14</strain>
    </source>
</reference>
<comment type="function">
    <text evidence="1">Associates with the EF-Tu.GDP complex and induces the exchange of GDP to GTP. It remains bound to the aminoacyl-tRNA.EF-Tu.GTP complex up to the GTP hydrolysis stage on the ribosome.</text>
</comment>
<comment type="subcellular location">
    <subcellularLocation>
        <location evidence="1">Cytoplasm</location>
    </subcellularLocation>
</comment>
<comment type="similarity">
    <text evidence="1">Belongs to the EF-Ts family.</text>
</comment>
<dbReference type="EMBL" id="CP000921">
    <property type="protein sequence ID" value="ACO23376.1"/>
    <property type="molecule type" value="Genomic_DNA"/>
</dbReference>
<dbReference type="RefSeq" id="WP_000808063.1">
    <property type="nucleotide sequence ID" value="NC_012469.1"/>
</dbReference>
<dbReference type="SMR" id="C1CUD1"/>
<dbReference type="GeneID" id="45652566"/>
<dbReference type="KEGG" id="snt:SPT_2232"/>
<dbReference type="HOGENOM" id="CLU_047155_0_1_9"/>
<dbReference type="GO" id="GO:0005737">
    <property type="term" value="C:cytoplasm"/>
    <property type="evidence" value="ECO:0007669"/>
    <property type="project" value="UniProtKB-SubCell"/>
</dbReference>
<dbReference type="GO" id="GO:0003746">
    <property type="term" value="F:translation elongation factor activity"/>
    <property type="evidence" value="ECO:0007669"/>
    <property type="project" value="UniProtKB-UniRule"/>
</dbReference>
<dbReference type="CDD" id="cd14275">
    <property type="entry name" value="UBA_EF-Ts"/>
    <property type="match status" value="1"/>
</dbReference>
<dbReference type="FunFam" id="1.10.286.20:FF:000004">
    <property type="entry name" value="Elongation factor Ts"/>
    <property type="match status" value="1"/>
</dbReference>
<dbReference type="FunFam" id="1.10.8.10:FF:000001">
    <property type="entry name" value="Elongation factor Ts"/>
    <property type="match status" value="1"/>
</dbReference>
<dbReference type="FunFam" id="3.30.479.20:FF:000009">
    <property type="entry name" value="Elongation factor Ts"/>
    <property type="match status" value="1"/>
</dbReference>
<dbReference type="FunFam" id="3.30.479.20:FF:000013">
    <property type="entry name" value="Elongation factor Ts"/>
    <property type="match status" value="1"/>
</dbReference>
<dbReference type="FunFam" id="3.30.479.20:FF:000016">
    <property type="entry name" value="Elongation factor Ts"/>
    <property type="match status" value="1"/>
</dbReference>
<dbReference type="Gene3D" id="1.10.286.20">
    <property type="match status" value="1"/>
</dbReference>
<dbReference type="Gene3D" id="1.10.8.10">
    <property type="entry name" value="DNA helicase RuvA subunit, C-terminal domain"/>
    <property type="match status" value="1"/>
</dbReference>
<dbReference type="Gene3D" id="3.30.479.20">
    <property type="entry name" value="Elongation factor Ts, dimerisation domain"/>
    <property type="match status" value="2"/>
</dbReference>
<dbReference type="HAMAP" id="MF_00050">
    <property type="entry name" value="EF_Ts"/>
    <property type="match status" value="1"/>
</dbReference>
<dbReference type="InterPro" id="IPR036402">
    <property type="entry name" value="EF-Ts_dimer_sf"/>
</dbReference>
<dbReference type="InterPro" id="IPR001816">
    <property type="entry name" value="Transl_elong_EFTs/EF1B"/>
</dbReference>
<dbReference type="InterPro" id="IPR014039">
    <property type="entry name" value="Transl_elong_EFTs/EF1B_dimer"/>
</dbReference>
<dbReference type="InterPro" id="IPR018101">
    <property type="entry name" value="Transl_elong_Ts_CS"/>
</dbReference>
<dbReference type="InterPro" id="IPR009060">
    <property type="entry name" value="UBA-like_sf"/>
</dbReference>
<dbReference type="NCBIfam" id="TIGR00116">
    <property type="entry name" value="tsf"/>
    <property type="match status" value="1"/>
</dbReference>
<dbReference type="PANTHER" id="PTHR11741">
    <property type="entry name" value="ELONGATION FACTOR TS"/>
    <property type="match status" value="1"/>
</dbReference>
<dbReference type="PANTHER" id="PTHR11741:SF0">
    <property type="entry name" value="ELONGATION FACTOR TS, MITOCHONDRIAL"/>
    <property type="match status" value="1"/>
</dbReference>
<dbReference type="Pfam" id="PF00889">
    <property type="entry name" value="EF_TS"/>
    <property type="match status" value="1"/>
</dbReference>
<dbReference type="SUPFAM" id="SSF54713">
    <property type="entry name" value="Elongation factor Ts (EF-Ts), dimerisation domain"/>
    <property type="match status" value="2"/>
</dbReference>
<dbReference type="SUPFAM" id="SSF46934">
    <property type="entry name" value="UBA-like"/>
    <property type="match status" value="1"/>
</dbReference>
<dbReference type="PROSITE" id="PS01126">
    <property type="entry name" value="EF_TS_1"/>
    <property type="match status" value="1"/>
</dbReference>
<dbReference type="PROSITE" id="PS01127">
    <property type="entry name" value="EF_TS_2"/>
    <property type="match status" value="1"/>
</dbReference>
<feature type="chain" id="PRO_1000189884" description="Elongation factor Ts">
    <location>
        <begin position="1"/>
        <end position="346"/>
    </location>
</feature>
<feature type="region of interest" description="Involved in Mg(2+) ion dislocation from EF-Tu" evidence="1">
    <location>
        <begin position="80"/>
        <end position="83"/>
    </location>
</feature>
<keyword id="KW-0963">Cytoplasm</keyword>
<keyword id="KW-0251">Elongation factor</keyword>
<keyword id="KW-0648">Protein biosynthesis</keyword>
<protein>
    <recommendedName>
        <fullName evidence="1">Elongation factor Ts</fullName>
        <shortName evidence="1">EF-Ts</shortName>
    </recommendedName>
</protein>
<name>EFTS_STRZT</name>
<sequence length="346" mass="37362">MAEITAKLVKELREKSGAGVMDAKKALVETDGDIEKAIELLREKGMAKAAKKADRVAAEGLTGVYVNGNVAAVIEVNAETDFVAKNAQFVELVNTTAKVIAEGKPANNEEALALIMPSGETLEAAYVSATATIGEKISFRRFALIEKTDAQHFGAYQHNGGRIGVISVVEGGDEALAKQLSMHIAAMKPTVLSYKELDEQFVKDELAQLNHVIDQDNESRAMVNKPALPHLKYGSKAQLTDDVIAQAEADIKAELAAEGKPEKIWDKIIPGKMDRFMLDNTKVDQAYTLLAQVYIMDDSKTVEAYLESVNASVVEFARFEVGEGIEKAANDFEAEVAATMAAALNN</sequence>
<gene>
    <name evidence="1" type="primary">tsf</name>
    <name type="ordered locus">SPT_2232</name>
</gene>
<accession>C1CUD1</accession>
<evidence type="ECO:0000255" key="1">
    <source>
        <dbReference type="HAMAP-Rule" id="MF_00050"/>
    </source>
</evidence>